<keyword id="KW-0143">Chaperone</keyword>
<keyword id="KW-0963">Cytoplasm</keyword>
<keyword id="KW-0346">Stress response</keyword>
<sequence length="190" mass="21723">MTETPNTSSEEIQTSEPSSDNELQTLQQENANLKAELKEKNDRYLMALAEAENSRKRLQKERTEMMQYAVENALLDFLPPMESMEKALGFASQTSDEVKNWAIGFQMILQQFKQVFEDKGVVEYSSKGELFNPYLHEAVEIEETTDIPEGTILEEFTKGYKIGDRPIRVAKVKVAKFPTKGNNDSNEEKE</sequence>
<gene>
    <name evidence="1" type="primary">grpE</name>
    <name type="ordered locus">TC_0674</name>
</gene>
<name>GRPE_CHLMU</name>
<evidence type="ECO:0000255" key="1">
    <source>
        <dbReference type="HAMAP-Rule" id="MF_01151"/>
    </source>
</evidence>
<evidence type="ECO:0000256" key="2">
    <source>
        <dbReference type="SAM" id="MobiDB-lite"/>
    </source>
</evidence>
<proteinExistence type="inferred from homology"/>
<feature type="chain" id="PRO_0000113768" description="Protein GrpE">
    <location>
        <begin position="1"/>
        <end position="190"/>
    </location>
</feature>
<feature type="region of interest" description="Disordered" evidence="2">
    <location>
        <begin position="1"/>
        <end position="34"/>
    </location>
</feature>
<feature type="compositionally biased region" description="Polar residues" evidence="2">
    <location>
        <begin position="1"/>
        <end position="31"/>
    </location>
</feature>
<reference key="1">
    <citation type="journal article" date="1990" name="J. Bacteriol.">
        <title>Heat shock response of murine Chlamydia trachomatis.</title>
        <authorList>
            <person name="Engel J.N."/>
            <person name="Pollack J."/>
            <person name="Perara E."/>
            <person name="Ganem D."/>
        </authorList>
    </citation>
    <scope>NUCLEOTIDE SEQUENCE [GENOMIC DNA]</scope>
    <source>
        <strain>MoPn</strain>
    </source>
</reference>
<reference key="2">
    <citation type="journal article" date="2000" name="Nucleic Acids Res.">
        <title>Genome sequences of Chlamydia trachomatis MoPn and Chlamydia pneumoniae AR39.</title>
        <authorList>
            <person name="Read T.D."/>
            <person name="Brunham R.C."/>
            <person name="Shen C."/>
            <person name="Gill S.R."/>
            <person name="Heidelberg J.F."/>
            <person name="White O."/>
            <person name="Hickey E.K."/>
            <person name="Peterson J.D."/>
            <person name="Utterback T.R."/>
            <person name="Berry K.J."/>
            <person name="Bass S."/>
            <person name="Linher K.D."/>
            <person name="Weidman J.F."/>
            <person name="Khouri H.M."/>
            <person name="Craven B."/>
            <person name="Bowman C."/>
            <person name="Dodson R.J."/>
            <person name="Gwinn M.L."/>
            <person name="Nelson W.C."/>
            <person name="DeBoy R.T."/>
            <person name="Kolonay J.F."/>
            <person name="McClarty G."/>
            <person name="Salzberg S.L."/>
            <person name="Eisen J.A."/>
            <person name="Fraser C.M."/>
        </authorList>
    </citation>
    <scope>NUCLEOTIDE SEQUENCE [LARGE SCALE GENOMIC DNA]</scope>
    <source>
        <strain>MoPn / Nigg</strain>
    </source>
</reference>
<comment type="function">
    <text evidence="1">Participates actively in the response to hyperosmotic and heat shock by preventing the aggregation of stress-denatured proteins, in association with DnaK and GrpE. It is the nucleotide exchange factor for DnaK and may function as a thermosensor. Unfolded proteins bind initially to DnaJ; upon interaction with the DnaJ-bound protein, DnaK hydrolyzes its bound ATP, resulting in the formation of a stable complex. GrpE releases ADP from DnaK; ATP binding to DnaK triggers the release of the substrate protein, thus completing the reaction cycle. Several rounds of ATP-dependent interactions between DnaJ, DnaK and GrpE are required for fully efficient folding.</text>
</comment>
<comment type="subunit">
    <text evidence="1">Homodimer.</text>
</comment>
<comment type="subcellular location">
    <subcellularLocation>
        <location evidence="1">Cytoplasm</location>
    </subcellularLocation>
</comment>
<comment type="similarity">
    <text evidence="1">Belongs to the GrpE family.</text>
</comment>
<accession>P23575</accession>
<organism>
    <name type="scientific">Chlamydia muridarum (strain MoPn / Nigg)</name>
    <dbReference type="NCBI Taxonomy" id="243161"/>
    <lineage>
        <taxon>Bacteria</taxon>
        <taxon>Pseudomonadati</taxon>
        <taxon>Chlamydiota</taxon>
        <taxon>Chlamydiia</taxon>
        <taxon>Chlamydiales</taxon>
        <taxon>Chlamydiaceae</taxon>
        <taxon>Chlamydia/Chlamydophila group</taxon>
        <taxon>Chlamydia</taxon>
    </lineage>
</organism>
<dbReference type="EMBL" id="M62819">
    <property type="protein sequence ID" value="AAA23137.1"/>
    <property type="molecule type" value="Genomic_DNA"/>
</dbReference>
<dbReference type="EMBL" id="AE002160">
    <property type="protein sequence ID" value="AAF39495.1"/>
    <property type="molecule type" value="Genomic_DNA"/>
</dbReference>
<dbReference type="PIR" id="G81676">
    <property type="entry name" value="G81676"/>
</dbReference>
<dbReference type="RefSeq" id="WP_010231190.1">
    <property type="nucleotide sequence ID" value="NZ_CP063055.1"/>
</dbReference>
<dbReference type="SMR" id="P23575"/>
<dbReference type="GeneID" id="1246035"/>
<dbReference type="KEGG" id="cmu:TC_0674"/>
<dbReference type="eggNOG" id="COG0576">
    <property type="taxonomic scope" value="Bacteria"/>
</dbReference>
<dbReference type="HOGENOM" id="CLU_057217_5_2_0"/>
<dbReference type="OrthoDB" id="9812586at2"/>
<dbReference type="Proteomes" id="UP000000800">
    <property type="component" value="Chromosome"/>
</dbReference>
<dbReference type="GO" id="GO:0005737">
    <property type="term" value="C:cytoplasm"/>
    <property type="evidence" value="ECO:0007669"/>
    <property type="project" value="UniProtKB-SubCell"/>
</dbReference>
<dbReference type="GO" id="GO:0000774">
    <property type="term" value="F:adenyl-nucleotide exchange factor activity"/>
    <property type="evidence" value="ECO:0007669"/>
    <property type="project" value="InterPro"/>
</dbReference>
<dbReference type="GO" id="GO:0042803">
    <property type="term" value="F:protein homodimerization activity"/>
    <property type="evidence" value="ECO:0007669"/>
    <property type="project" value="InterPro"/>
</dbReference>
<dbReference type="GO" id="GO:0051087">
    <property type="term" value="F:protein-folding chaperone binding"/>
    <property type="evidence" value="ECO:0007669"/>
    <property type="project" value="InterPro"/>
</dbReference>
<dbReference type="GO" id="GO:0051082">
    <property type="term" value="F:unfolded protein binding"/>
    <property type="evidence" value="ECO:0007669"/>
    <property type="project" value="TreeGrafter"/>
</dbReference>
<dbReference type="GO" id="GO:0006457">
    <property type="term" value="P:protein folding"/>
    <property type="evidence" value="ECO:0007669"/>
    <property type="project" value="InterPro"/>
</dbReference>
<dbReference type="CDD" id="cd00446">
    <property type="entry name" value="GrpE"/>
    <property type="match status" value="1"/>
</dbReference>
<dbReference type="FunFam" id="2.30.22.10:FF:000001">
    <property type="entry name" value="Protein GrpE"/>
    <property type="match status" value="1"/>
</dbReference>
<dbReference type="Gene3D" id="3.90.20.20">
    <property type="match status" value="1"/>
</dbReference>
<dbReference type="Gene3D" id="2.30.22.10">
    <property type="entry name" value="Head domain of nucleotide exchange factor GrpE"/>
    <property type="match status" value="1"/>
</dbReference>
<dbReference type="HAMAP" id="MF_01151">
    <property type="entry name" value="GrpE"/>
    <property type="match status" value="1"/>
</dbReference>
<dbReference type="InterPro" id="IPR000740">
    <property type="entry name" value="GrpE"/>
</dbReference>
<dbReference type="InterPro" id="IPR013805">
    <property type="entry name" value="GrpE_coiled_coil"/>
</dbReference>
<dbReference type="InterPro" id="IPR009012">
    <property type="entry name" value="GrpE_head"/>
</dbReference>
<dbReference type="PANTHER" id="PTHR21237">
    <property type="entry name" value="GRPE PROTEIN"/>
    <property type="match status" value="1"/>
</dbReference>
<dbReference type="PANTHER" id="PTHR21237:SF23">
    <property type="entry name" value="GRPE PROTEIN HOMOLOG, MITOCHONDRIAL"/>
    <property type="match status" value="1"/>
</dbReference>
<dbReference type="Pfam" id="PF01025">
    <property type="entry name" value="GrpE"/>
    <property type="match status" value="1"/>
</dbReference>
<dbReference type="PRINTS" id="PR00773">
    <property type="entry name" value="GRPEPROTEIN"/>
</dbReference>
<dbReference type="SUPFAM" id="SSF58014">
    <property type="entry name" value="Coiled-coil domain of nucleotide exchange factor GrpE"/>
    <property type="match status" value="1"/>
</dbReference>
<dbReference type="SUPFAM" id="SSF51064">
    <property type="entry name" value="Head domain of nucleotide exchange factor GrpE"/>
    <property type="match status" value="1"/>
</dbReference>
<dbReference type="PROSITE" id="PS01071">
    <property type="entry name" value="GRPE"/>
    <property type="match status" value="1"/>
</dbReference>
<protein>
    <recommendedName>
        <fullName evidence="1">Protein GrpE</fullName>
    </recommendedName>
    <alternativeName>
        <fullName evidence="1">HSP-70 cofactor</fullName>
    </alternativeName>
</protein>